<protein>
    <recommendedName>
        <fullName evidence="4">Extended FMRFamide-2</fullName>
        <shortName evidence="4">FMRFa-2</shortName>
    </recommendedName>
</protein>
<keyword id="KW-0027">Amidation</keyword>
<keyword id="KW-0903">Direct protein sequencing</keyword>
<keyword id="KW-0527">Neuropeptide</keyword>
<keyword id="KW-0964">Secreted</keyword>
<dbReference type="GO" id="GO:0005576">
    <property type="term" value="C:extracellular region"/>
    <property type="evidence" value="ECO:0007669"/>
    <property type="project" value="UniProtKB-SubCell"/>
</dbReference>
<dbReference type="GO" id="GO:0007218">
    <property type="term" value="P:neuropeptide signaling pathway"/>
    <property type="evidence" value="ECO:0007669"/>
    <property type="project" value="UniProtKB-KW"/>
</dbReference>
<comment type="function">
    <text evidence="1">FMRFamides and FMRFamide-like peptides are neuropeptides.</text>
</comment>
<comment type="subcellular location">
    <subcellularLocation>
        <location evidence="6">Secreted</location>
    </subcellularLocation>
</comment>
<comment type="similarity">
    <text evidence="2">Belongs to the FARP (FMRF amide related peptide) family.</text>
</comment>
<name>FAR2_KARBI</name>
<evidence type="ECO:0000250" key="1">
    <source>
        <dbReference type="UniProtKB" id="P34405"/>
    </source>
</evidence>
<evidence type="ECO:0000255" key="2"/>
<evidence type="ECO:0000269" key="3">
    <source>
    </source>
</evidence>
<evidence type="ECO:0000303" key="4">
    <source>
    </source>
</evidence>
<evidence type="ECO:0000305" key="5"/>
<evidence type="ECO:0000305" key="6">
    <source>
    </source>
</evidence>
<proteinExistence type="evidence at protein level"/>
<sequence>SDYLQLAR</sequence>
<accession>B3A063</accession>
<organism>
    <name type="scientific">Karoophasma biedouwense</name>
    <name type="common">Gladiator</name>
    <name type="synonym">Heel-walker</name>
    <dbReference type="NCBI Taxonomy" id="253133"/>
    <lineage>
        <taxon>Eukaryota</taxon>
        <taxon>Metazoa</taxon>
        <taxon>Ecdysozoa</taxon>
        <taxon>Arthropoda</taxon>
        <taxon>Hexapoda</taxon>
        <taxon>Insecta</taxon>
        <taxon>Pterygota</taxon>
        <taxon>Neoptera</taxon>
        <taxon>Polyneoptera</taxon>
        <taxon>Mantophasmatodea</taxon>
        <taxon>Austrophasmatidae</taxon>
        <taxon>Karoophasma</taxon>
    </lineage>
</organism>
<reference evidence="5" key="1">
    <citation type="journal article" date="2012" name="Syst. Biol.">
        <title>Peptidomics-based phylogeny and biogeography of Mantophasmatodea (Hexapoda).</title>
        <authorList>
            <person name="Predel R."/>
            <person name="Neupert S."/>
            <person name="Huetteroth W."/>
            <person name="Kahnt J."/>
            <person name="Waidelich D."/>
            <person name="Roth S."/>
        </authorList>
    </citation>
    <scope>PROTEIN SEQUENCE</scope>
    <scope>AMIDATION AT ARG-8</scope>
    <source>
        <tissue evidence="3">Thoracic perisympathetic organs</tissue>
    </source>
</reference>
<feature type="peptide" id="PRO_0000421487" description="Extended FMRFamide-2" evidence="3">
    <location>
        <begin position="1"/>
        <end position="8"/>
    </location>
</feature>
<feature type="modified residue" description="Arginine amide" evidence="3">
    <location>
        <position position="8"/>
    </location>
</feature>
<feature type="unsure residue" description="L or I" evidence="3">
    <location>
        <position position="4"/>
    </location>
</feature>
<feature type="unsure residue" description="L or I" evidence="3">
    <location>
        <position position="6"/>
    </location>
</feature>